<evidence type="ECO:0000255" key="1">
    <source>
        <dbReference type="HAMAP-Rule" id="MF_01071"/>
    </source>
</evidence>
<feature type="chain" id="PRO_1000064599" description="UPF0266 membrane protein YPDSF_1369">
    <location>
        <begin position="1"/>
        <end position="153"/>
    </location>
</feature>
<feature type="transmembrane region" description="Helical" evidence="1">
    <location>
        <begin position="6"/>
        <end position="26"/>
    </location>
</feature>
<feature type="transmembrane region" description="Helical" evidence="1">
    <location>
        <begin position="45"/>
        <end position="65"/>
    </location>
</feature>
<feature type="transmembrane region" description="Helical" evidence="1">
    <location>
        <begin position="67"/>
        <end position="87"/>
    </location>
</feature>
<keyword id="KW-0997">Cell inner membrane</keyword>
<keyword id="KW-1003">Cell membrane</keyword>
<keyword id="KW-0472">Membrane</keyword>
<keyword id="KW-0812">Transmembrane</keyword>
<keyword id="KW-1133">Transmembrane helix</keyword>
<name>Y1369_YERPP</name>
<accession>A4TKE6</accession>
<organism>
    <name type="scientific">Yersinia pestis (strain Pestoides F)</name>
    <dbReference type="NCBI Taxonomy" id="386656"/>
    <lineage>
        <taxon>Bacteria</taxon>
        <taxon>Pseudomonadati</taxon>
        <taxon>Pseudomonadota</taxon>
        <taxon>Gammaproteobacteria</taxon>
        <taxon>Enterobacterales</taxon>
        <taxon>Yersiniaceae</taxon>
        <taxon>Yersinia</taxon>
    </lineage>
</organism>
<gene>
    <name type="ordered locus">YPDSF_1369</name>
</gene>
<proteinExistence type="inferred from homology"/>
<reference key="1">
    <citation type="submission" date="2007-02" db="EMBL/GenBank/DDBJ databases">
        <title>Complete sequence of chromosome of Yersinia pestis Pestoides F.</title>
        <authorList>
            <consortium name="US DOE Joint Genome Institute"/>
            <person name="Copeland A."/>
            <person name="Lucas S."/>
            <person name="Lapidus A."/>
            <person name="Barry K."/>
            <person name="Detter J.C."/>
            <person name="Glavina del Rio T."/>
            <person name="Hammon N."/>
            <person name="Israni S."/>
            <person name="Dalin E."/>
            <person name="Tice H."/>
            <person name="Pitluck S."/>
            <person name="Di Bartolo G."/>
            <person name="Chain P."/>
            <person name="Malfatti S."/>
            <person name="Shin M."/>
            <person name="Vergez L."/>
            <person name="Schmutz J."/>
            <person name="Larimer F."/>
            <person name="Land M."/>
            <person name="Hauser L."/>
            <person name="Worsham P."/>
            <person name="Chu M."/>
            <person name="Bearden S."/>
            <person name="Garcia E."/>
            <person name="Richardson P."/>
        </authorList>
    </citation>
    <scope>NUCLEOTIDE SEQUENCE [LARGE SCALE GENOMIC DNA]</scope>
    <source>
        <strain>Pestoides F</strain>
    </source>
</reference>
<comment type="subcellular location">
    <subcellularLocation>
        <location evidence="1">Cell inner membrane</location>
        <topology evidence="1">Multi-pass membrane protein</topology>
    </subcellularLocation>
</comment>
<comment type="similarity">
    <text evidence="1">Belongs to the UPF0266 family.</text>
</comment>
<dbReference type="EMBL" id="CP000668">
    <property type="protein sequence ID" value="ABP39758.1"/>
    <property type="molecule type" value="Genomic_DNA"/>
</dbReference>
<dbReference type="RefSeq" id="WP_002211066.1">
    <property type="nucleotide sequence ID" value="NZ_CP009715.1"/>
</dbReference>
<dbReference type="KEGG" id="ypp:YPDSF_1369"/>
<dbReference type="PATRIC" id="fig|386656.14.peg.2428"/>
<dbReference type="GO" id="GO:0005886">
    <property type="term" value="C:plasma membrane"/>
    <property type="evidence" value="ECO:0007669"/>
    <property type="project" value="UniProtKB-SubCell"/>
</dbReference>
<dbReference type="HAMAP" id="MF_01071">
    <property type="entry name" value="UPF0266"/>
    <property type="match status" value="1"/>
</dbReference>
<dbReference type="InterPro" id="IPR009328">
    <property type="entry name" value="DUF986"/>
</dbReference>
<dbReference type="NCBIfam" id="NF002791">
    <property type="entry name" value="PRK02913.1"/>
    <property type="match status" value="1"/>
</dbReference>
<dbReference type="Pfam" id="PF06173">
    <property type="entry name" value="DUF986"/>
    <property type="match status" value="1"/>
</dbReference>
<dbReference type="PIRSF" id="PIRSF020687">
    <property type="entry name" value="UCP020687"/>
    <property type="match status" value="1"/>
</dbReference>
<protein>
    <recommendedName>
        <fullName evidence="1">UPF0266 membrane protein YPDSF_1369</fullName>
    </recommendedName>
</protein>
<sequence>MSVTDLVLVVFIALLLIYAIYDEFIMNMMKGKTRLQVHLKRKNKLDCMIFVGLIGILIYNNVMAHGAPLTTYLLVGLALVAVYISYIRWPKLLFKNTGFFYANTFIEYSRIKSMNLSEDGILVIDLEQRRLLIQVKKLDDLEKIYNFFIENQS</sequence>